<feature type="chain" id="PRO_0000047470" description="Zinc finger protein 229">
    <location>
        <begin position="1"/>
        <end position="825"/>
    </location>
</feature>
<feature type="domain" description="KRAB" evidence="2">
    <location>
        <begin position="34"/>
        <end position="108"/>
    </location>
</feature>
<feature type="zinc finger region" description="C2H2-type 1; degenerate" evidence="1">
    <location>
        <begin position="291"/>
        <end position="315"/>
    </location>
</feature>
<feature type="zinc finger region" description="C2H2-type 2" evidence="1">
    <location>
        <begin position="349"/>
        <end position="371"/>
    </location>
</feature>
<feature type="zinc finger region" description="C2H2-type 3" evidence="1">
    <location>
        <begin position="377"/>
        <end position="399"/>
    </location>
</feature>
<feature type="zinc finger region" description="C2H2-type 4" evidence="1">
    <location>
        <begin position="405"/>
        <end position="427"/>
    </location>
</feature>
<feature type="zinc finger region" description="C2H2-type 5" evidence="1">
    <location>
        <begin position="433"/>
        <end position="455"/>
    </location>
</feature>
<feature type="zinc finger region" description="C2H2-type 6" evidence="1">
    <location>
        <begin position="461"/>
        <end position="483"/>
    </location>
</feature>
<feature type="zinc finger region" description="C2H2-type 7" evidence="1">
    <location>
        <begin position="489"/>
        <end position="511"/>
    </location>
</feature>
<feature type="zinc finger region" description="C2H2-type 8" evidence="1">
    <location>
        <begin position="517"/>
        <end position="539"/>
    </location>
</feature>
<feature type="zinc finger region" description="C2H2-type 9" evidence="1">
    <location>
        <begin position="545"/>
        <end position="566"/>
    </location>
</feature>
<feature type="zinc finger region" description="C2H2-type 10" evidence="1">
    <location>
        <begin position="572"/>
        <end position="594"/>
    </location>
</feature>
<feature type="zinc finger region" description="C2H2-type 11" evidence="1">
    <location>
        <begin position="600"/>
        <end position="622"/>
    </location>
</feature>
<feature type="zinc finger region" description="C2H2-type 12" evidence="1">
    <location>
        <begin position="628"/>
        <end position="650"/>
    </location>
</feature>
<feature type="zinc finger region" description="C2H2-type 13" evidence="1">
    <location>
        <begin position="656"/>
        <end position="678"/>
    </location>
</feature>
<feature type="zinc finger region" description="C2H2-type 14" evidence="1">
    <location>
        <begin position="684"/>
        <end position="706"/>
    </location>
</feature>
<feature type="zinc finger region" description="C2H2-type 15" evidence="1">
    <location>
        <begin position="712"/>
        <end position="734"/>
    </location>
</feature>
<feature type="zinc finger region" description="C2H2-type 16" evidence="1">
    <location>
        <begin position="740"/>
        <end position="762"/>
    </location>
</feature>
<feature type="zinc finger region" description="C2H2-type 17" evidence="1">
    <location>
        <begin position="768"/>
        <end position="790"/>
    </location>
</feature>
<feature type="zinc finger region" description="C2H2-type 18" evidence="1">
    <location>
        <begin position="796"/>
        <end position="818"/>
    </location>
</feature>
<feature type="region of interest" description="Disordered" evidence="3">
    <location>
        <begin position="1"/>
        <end position="26"/>
    </location>
</feature>
<feature type="cross-link" description="Glycyl lysine isopeptide (Lys-Gly) (interchain with G-Cter in SUMO2)" evidence="8">
    <location>
        <position position="543"/>
    </location>
</feature>
<feature type="splice variant" id="VSP_054778" description="In isoform 2." evidence="6">
    <location>
        <begin position="75"/>
        <end position="80"/>
    </location>
</feature>
<feature type="sequence variant" id="VAR_057408" description="In dbSNP:rs2571174." evidence="4">
    <original>F</original>
    <variation>S</variation>
    <location>
        <position position="156"/>
    </location>
</feature>
<feature type="sequence variant" id="VAR_057409" description="In dbSNP:rs12151338.">
    <original>R</original>
    <variation>C</variation>
    <location>
        <position position="337"/>
    </location>
</feature>
<feature type="sequence variant" id="VAR_061942" description="In dbSNP:rs57014690.">
    <original>S</original>
    <variation>N</variation>
    <location>
        <position position="417"/>
    </location>
</feature>
<feature type="sequence variant" id="VAR_060426" description="In dbSNP:rs1434579." evidence="5">
    <original>G</original>
    <variation>R</variation>
    <location>
        <position position="662"/>
    </location>
</feature>
<feature type="sequence variant" id="VAR_060427" description="In dbSNP:rs10409807.">
    <original>G</original>
    <variation>R</variation>
    <location>
        <position position="804"/>
    </location>
</feature>
<accession>Q9UJW7</accession>
<accession>B2RWN3</accession>
<accession>Q59FV2</accession>
<accession>Q86WL9</accession>
<dbReference type="EMBL" id="AC084239">
    <property type="protein sequence ID" value="AAG23970.1"/>
    <property type="status" value="ALT_SEQ"/>
    <property type="molecule type" value="Genomic_DNA"/>
</dbReference>
<dbReference type="EMBL" id="BC150612">
    <property type="protein sequence ID" value="AAI50613.1"/>
    <property type="molecule type" value="mRNA"/>
</dbReference>
<dbReference type="EMBL" id="AF192979">
    <property type="protein sequence ID" value="AAF07964.1"/>
    <property type="molecule type" value="mRNA"/>
</dbReference>
<dbReference type="EMBL" id="AY166791">
    <property type="protein sequence ID" value="AAO45840.1"/>
    <property type="molecule type" value="mRNA"/>
</dbReference>
<dbReference type="EMBL" id="AB209357">
    <property type="protein sequence ID" value="BAD92594.1"/>
    <property type="molecule type" value="mRNA"/>
</dbReference>
<dbReference type="CCDS" id="CCDS42574.1">
    <molecule id="Q9UJW7-1"/>
</dbReference>
<dbReference type="CCDS" id="CCDS62706.1">
    <molecule id="Q9UJW7-2"/>
</dbReference>
<dbReference type="RefSeq" id="NP_001265439.2">
    <molecule id="Q9UJW7-2"/>
    <property type="nucleotide sequence ID" value="NM_001278510.3"/>
</dbReference>
<dbReference type="RefSeq" id="NP_055333.3">
    <molecule id="Q9UJW7-1"/>
    <property type="nucleotide sequence ID" value="NM_014518.4"/>
</dbReference>
<dbReference type="RefSeq" id="XP_011525594.1">
    <molecule id="Q9UJW7-2"/>
    <property type="nucleotide sequence ID" value="XM_011527292.3"/>
</dbReference>
<dbReference type="RefSeq" id="XP_047295341.1">
    <molecule id="Q9UJW7-1"/>
    <property type="nucleotide sequence ID" value="XM_047439385.1"/>
</dbReference>
<dbReference type="RefSeq" id="XP_054178025.1">
    <molecule id="Q9UJW7-1"/>
    <property type="nucleotide sequence ID" value="XM_054322050.1"/>
</dbReference>
<dbReference type="RefSeq" id="XP_054178026.1">
    <molecule id="Q9UJW7-2"/>
    <property type="nucleotide sequence ID" value="XM_054322051.1"/>
</dbReference>
<dbReference type="SMR" id="Q9UJW7"/>
<dbReference type="BioGRID" id="113555">
    <property type="interactions" value="5"/>
</dbReference>
<dbReference type="FunCoup" id="Q9UJW7">
    <property type="interactions" value="4"/>
</dbReference>
<dbReference type="IntAct" id="Q9UJW7">
    <property type="interactions" value="4"/>
</dbReference>
<dbReference type="STRING" id="9606.ENSP00000479884"/>
<dbReference type="GlyGen" id="Q9UJW7">
    <property type="glycosylation" value="1 site, 1 O-linked glycan (1 site)"/>
</dbReference>
<dbReference type="iPTMnet" id="Q9UJW7"/>
<dbReference type="PhosphoSitePlus" id="Q9UJW7"/>
<dbReference type="BioMuta" id="ZNF229"/>
<dbReference type="DMDM" id="296453070"/>
<dbReference type="REPRODUCTION-2DPAGE" id="Q9UJW7"/>
<dbReference type="jPOST" id="Q9UJW7"/>
<dbReference type="MassIVE" id="Q9UJW7"/>
<dbReference type="PaxDb" id="9606-ENSP00000479884"/>
<dbReference type="PeptideAtlas" id="Q9UJW7"/>
<dbReference type="ProteomicsDB" id="84674">
    <molecule id="Q9UJW7-1"/>
</dbReference>
<dbReference type="Antibodypedia" id="72498">
    <property type="antibodies" value="59 antibodies from 13 providers"/>
</dbReference>
<dbReference type="DNASU" id="7772"/>
<dbReference type="Ensembl" id="ENST00000613197.4">
    <molecule id="Q9UJW7-2"/>
    <property type="protein sequence ID" value="ENSP00000479807.1"/>
    <property type="gene ID" value="ENSG00000278318.5"/>
</dbReference>
<dbReference type="Ensembl" id="ENST00000614049.5">
    <molecule id="Q9UJW7-1"/>
    <property type="protein sequence ID" value="ENSP00000479884.1"/>
    <property type="gene ID" value="ENSG00000278318.5"/>
</dbReference>
<dbReference type="GeneID" id="7772"/>
<dbReference type="KEGG" id="hsa:7772"/>
<dbReference type="MANE-Select" id="ENST00000614049.5">
    <property type="protein sequence ID" value="ENSP00000479884.1"/>
    <property type="RefSeq nucleotide sequence ID" value="NM_014518.4"/>
    <property type="RefSeq protein sequence ID" value="NP_055333.3"/>
</dbReference>
<dbReference type="UCSC" id="uc032hzj.2">
    <molecule id="Q9UJW7-1"/>
    <property type="organism name" value="human"/>
</dbReference>
<dbReference type="AGR" id="HGNC:13022"/>
<dbReference type="CTD" id="7772"/>
<dbReference type="GeneCards" id="ZNF229"/>
<dbReference type="HGNC" id="HGNC:13022">
    <property type="gene designation" value="ZNF229"/>
</dbReference>
<dbReference type="HPA" id="ENSG00000278318">
    <property type="expression patterns" value="Low tissue specificity"/>
</dbReference>
<dbReference type="MIM" id="620827">
    <property type="type" value="gene"/>
</dbReference>
<dbReference type="neXtProt" id="NX_Q9UJW7"/>
<dbReference type="OpenTargets" id="ENSG00000278318"/>
<dbReference type="PharmGKB" id="PA37601"/>
<dbReference type="VEuPathDB" id="HostDB:ENSG00000278318"/>
<dbReference type="eggNOG" id="KOG1721">
    <property type="taxonomic scope" value="Eukaryota"/>
</dbReference>
<dbReference type="GeneTree" id="ENSGT00940000163513"/>
<dbReference type="HOGENOM" id="CLU_002678_17_1_1"/>
<dbReference type="InParanoid" id="Q9UJW7"/>
<dbReference type="OMA" id="IWEQVAG"/>
<dbReference type="OrthoDB" id="9820348at2759"/>
<dbReference type="PAN-GO" id="Q9UJW7">
    <property type="GO annotations" value="4 GO annotations based on evolutionary models"/>
</dbReference>
<dbReference type="PhylomeDB" id="Q9UJW7"/>
<dbReference type="PathwayCommons" id="Q9UJW7"/>
<dbReference type="BioGRID-ORCS" id="7772">
    <property type="hits" value="13 hits in 1166 CRISPR screens"/>
</dbReference>
<dbReference type="GenomeRNAi" id="7772"/>
<dbReference type="Pharos" id="Q9UJW7">
    <property type="development level" value="Tdark"/>
</dbReference>
<dbReference type="PRO" id="PR:Q9UJW7"/>
<dbReference type="Proteomes" id="UP000005640">
    <property type="component" value="Chromosome 19"/>
</dbReference>
<dbReference type="RNAct" id="Q9UJW7">
    <property type="molecule type" value="protein"/>
</dbReference>
<dbReference type="Bgee" id="ENSG00000278318">
    <property type="expression patterns" value="Expressed in primordial germ cell in gonad and 117 other cell types or tissues"/>
</dbReference>
<dbReference type="ExpressionAtlas" id="Q9UJW7">
    <property type="expression patterns" value="baseline and differential"/>
</dbReference>
<dbReference type="GO" id="GO:0005634">
    <property type="term" value="C:nucleus"/>
    <property type="evidence" value="ECO:0000318"/>
    <property type="project" value="GO_Central"/>
</dbReference>
<dbReference type="GO" id="GO:0003677">
    <property type="term" value="F:DNA binding"/>
    <property type="evidence" value="ECO:0007669"/>
    <property type="project" value="UniProtKB-KW"/>
</dbReference>
<dbReference type="GO" id="GO:0008270">
    <property type="term" value="F:zinc ion binding"/>
    <property type="evidence" value="ECO:0007669"/>
    <property type="project" value="UniProtKB-KW"/>
</dbReference>
<dbReference type="GO" id="GO:0006357">
    <property type="term" value="P:regulation of transcription by RNA polymerase II"/>
    <property type="evidence" value="ECO:0000318"/>
    <property type="project" value="GO_Central"/>
</dbReference>
<dbReference type="CDD" id="cd07765">
    <property type="entry name" value="KRAB_A-box"/>
    <property type="match status" value="1"/>
</dbReference>
<dbReference type="FunFam" id="3.30.160.60:FF:000295">
    <property type="entry name" value="zinc finger protein 19"/>
    <property type="match status" value="1"/>
</dbReference>
<dbReference type="FunFam" id="3.30.160.60:FF:001534">
    <property type="entry name" value="zinc finger protein 227 isoform X1"/>
    <property type="match status" value="1"/>
</dbReference>
<dbReference type="FunFam" id="3.30.160.60:FF:000690">
    <property type="entry name" value="Zinc finger protein 354C"/>
    <property type="match status" value="1"/>
</dbReference>
<dbReference type="FunFam" id="3.30.160.60:FF:001498">
    <property type="entry name" value="Zinc finger protein 404"/>
    <property type="match status" value="1"/>
</dbReference>
<dbReference type="FunFam" id="3.30.160.60:FF:000663">
    <property type="entry name" value="Zinc finger protein 45"/>
    <property type="match status" value="9"/>
</dbReference>
<dbReference type="FunFam" id="3.30.160.60:FF:002090">
    <property type="entry name" value="Zinc finger protein 473"/>
    <property type="match status" value="1"/>
</dbReference>
<dbReference type="FunFam" id="3.30.160.60:FF:000624">
    <property type="entry name" value="zinc finger protein 697"/>
    <property type="match status" value="1"/>
</dbReference>
<dbReference type="FunFam" id="3.30.160.60:FF:000933">
    <property type="entry name" value="zinc finger protein 771"/>
    <property type="match status" value="1"/>
</dbReference>
<dbReference type="FunFam" id="3.30.160.60:FF:000099">
    <property type="entry name" value="Zinc finger protein 79"/>
    <property type="match status" value="1"/>
</dbReference>
<dbReference type="Gene3D" id="6.10.140.140">
    <property type="match status" value="1"/>
</dbReference>
<dbReference type="Gene3D" id="3.30.160.60">
    <property type="entry name" value="Classic Zinc Finger"/>
    <property type="match status" value="17"/>
</dbReference>
<dbReference type="InterPro" id="IPR001909">
    <property type="entry name" value="KRAB"/>
</dbReference>
<dbReference type="InterPro" id="IPR036051">
    <property type="entry name" value="KRAB_dom_sf"/>
</dbReference>
<dbReference type="InterPro" id="IPR036236">
    <property type="entry name" value="Znf_C2H2_sf"/>
</dbReference>
<dbReference type="InterPro" id="IPR013087">
    <property type="entry name" value="Znf_C2H2_type"/>
</dbReference>
<dbReference type="PANTHER" id="PTHR24379">
    <property type="entry name" value="KRAB AND ZINC FINGER DOMAIN-CONTAINING"/>
    <property type="match status" value="1"/>
</dbReference>
<dbReference type="PANTHER" id="PTHR24379:SF132">
    <property type="entry name" value="ZINC FINGER PROTEIN 214"/>
    <property type="match status" value="1"/>
</dbReference>
<dbReference type="Pfam" id="PF01352">
    <property type="entry name" value="KRAB"/>
    <property type="match status" value="1"/>
</dbReference>
<dbReference type="Pfam" id="PF00096">
    <property type="entry name" value="zf-C2H2"/>
    <property type="match status" value="16"/>
</dbReference>
<dbReference type="SMART" id="SM00349">
    <property type="entry name" value="KRAB"/>
    <property type="match status" value="1"/>
</dbReference>
<dbReference type="SMART" id="SM00355">
    <property type="entry name" value="ZnF_C2H2"/>
    <property type="match status" value="17"/>
</dbReference>
<dbReference type="SUPFAM" id="SSF57667">
    <property type="entry name" value="beta-beta-alpha zinc fingers"/>
    <property type="match status" value="10"/>
</dbReference>
<dbReference type="SUPFAM" id="SSF109640">
    <property type="entry name" value="KRAB domain (Kruppel-associated box)"/>
    <property type="match status" value="1"/>
</dbReference>
<dbReference type="PROSITE" id="PS50805">
    <property type="entry name" value="KRAB"/>
    <property type="match status" value="1"/>
</dbReference>
<dbReference type="PROSITE" id="PS00028">
    <property type="entry name" value="ZINC_FINGER_C2H2_1"/>
    <property type="match status" value="16"/>
</dbReference>
<dbReference type="PROSITE" id="PS50157">
    <property type="entry name" value="ZINC_FINGER_C2H2_2"/>
    <property type="match status" value="17"/>
</dbReference>
<comment type="function">
    <text>May be involved in transcriptional regulation.</text>
</comment>
<comment type="interaction">
    <interactant intactId="EBI-12068564">
        <id>Q9UJW7</id>
    </interactant>
    <interactant intactId="EBI-10311131">
        <id>Q9NP86</id>
        <label>CABP5</label>
    </interactant>
    <organismsDiffer>false</organismsDiffer>
    <experiments>3</experiments>
</comment>
<comment type="interaction">
    <interactant intactId="EBI-12068564">
        <id>Q9UJW7</id>
    </interactant>
    <interactant intactId="EBI-10977815">
        <id>P07951-2</id>
        <label>TPM2</label>
    </interactant>
    <organismsDiffer>false</organismsDiffer>
    <experiments>3</experiments>
</comment>
<comment type="subcellular location">
    <subcellularLocation>
        <location evidence="6">Nucleus</location>
    </subcellularLocation>
</comment>
<comment type="alternative products">
    <event type="alternative splicing"/>
    <isoform>
        <id>Q9UJW7-1</id>
        <name>1</name>
        <sequence type="displayed"/>
    </isoform>
    <isoform>
        <id>Q9UJW7-2</id>
        <name>2</name>
        <sequence type="described" ref="VSP_054778"/>
    </isoform>
</comment>
<comment type="similarity">
    <text evidence="6">Belongs to the krueppel C2H2-type zinc-finger protein family.</text>
</comment>
<comment type="sequence caution" evidence="6">
    <conflict type="erroneous gene model prediction">
        <sequence resource="EMBL-CDS" id="AAG23970"/>
    </conflict>
</comment>
<proteinExistence type="evidence at protein level"/>
<name>ZN229_HUMAN</name>
<reference key="1">
    <citation type="journal article" date="2004" name="Nature">
        <title>The DNA sequence and biology of human chromosome 19.</title>
        <authorList>
            <person name="Grimwood J."/>
            <person name="Gordon L.A."/>
            <person name="Olsen A.S."/>
            <person name="Terry A."/>
            <person name="Schmutz J."/>
            <person name="Lamerdin J.E."/>
            <person name="Hellsten U."/>
            <person name="Goodstein D."/>
            <person name="Couronne O."/>
            <person name="Tran-Gyamfi M."/>
            <person name="Aerts A."/>
            <person name="Altherr M."/>
            <person name="Ashworth L."/>
            <person name="Bajorek E."/>
            <person name="Black S."/>
            <person name="Branscomb E."/>
            <person name="Caenepeel S."/>
            <person name="Carrano A.V."/>
            <person name="Caoile C."/>
            <person name="Chan Y.M."/>
            <person name="Christensen M."/>
            <person name="Cleland C.A."/>
            <person name="Copeland A."/>
            <person name="Dalin E."/>
            <person name="Dehal P."/>
            <person name="Denys M."/>
            <person name="Detter J.C."/>
            <person name="Escobar J."/>
            <person name="Flowers D."/>
            <person name="Fotopulos D."/>
            <person name="Garcia C."/>
            <person name="Georgescu A.M."/>
            <person name="Glavina T."/>
            <person name="Gomez M."/>
            <person name="Gonzales E."/>
            <person name="Groza M."/>
            <person name="Hammon N."/>
            <person name="Hawkins T."/>
            <person name="Haydu L."/>
            <person name="Ho I."/>
            <person name="Huang W."/>
            <person name="Israni S."/>
            <person name="Jett J."/>
            <person name="Kadner K."/>
            <person name="Kimball H."/>
            <person name="Kobayashi A."/>
            <person name="Larionov V."/>
            <person name="Leem S.-H."/>
            <person name="Lopez F."/>
            <person name="Lou Y."/>
            <person name="Lowry S."/>
            <person name="Malfatti S."/>
            <person name="Martinez D."/>
            <person name="McCready P.M."/>
            <person name="Medina C."/>
            <person name="Morgan J."/>
            <person name="Nelson K."/>
            <person name="Nolan M."/>
            <person name="Ovcharenko I."/>
            <person name="Pitluck S."/>
            <person name="Pollard M."/>
            <person name="Popkie A.P."/>
            <person name="Predki P."/>
            <person name="Quan G."/>
            <person name="Ramirez L."/>
            <person name="Rash S."/>
            <person name="Retterer J."/>
            <person name="Rodriguez A."/>
            <person name="Rogers S."/>
            <person name="Salamov A."/>
            <person name="Salazar A."/>
            <person name="She X."/>
            <person name="Smith D."/>
            <person name="Slezak T."/>
            <person name="Solovyev V."/>
            <person name="Thayer N."/>
            <person name="Tice H."/>
            <person name="Tsai M."/>
            <person name="Ustaszewska A."/>
            <person name="Vo N."/>
            <person name="Wagner M."/>
            <person name="Wheeler J."/>
            <person name="Wu K."/>
            <person name="Xie G."/>
            <person name="Yang J."/>
            <person name="Dubchak I."/>
            <person name="Furey T.S."/>
            <person name="DeJong P."/>
            <person name="Dickson M."/>
            <person name="Gordon D."/>
            <person name="Eichler E.E."/>
            <person name="Pennacchio L.A."/>
            <person name="Richardson P."/>
            <person name="Stubbs L."/>
            <person name="Rokhsar D.S."/>
            <person name="Myers R.M."/>
            <person name="Rubin E.M."/>
            <person name="Lucas S.M."/>
        </authorList>
    </citation>
    <scope>NUCLEOTIDE SEQUENCE [LARGE SCALE GENOMIC DNA]</scope>
</reference>
<reference key="2">
    <citation type="journal article" date="2004" name="Genome Res.">
        <title>The status, quality, and expansion of the NIH full-length cDNA project: the Mammalian Gene Collection (MGC).</title>
        <authorList>
            <consortium name="The MGC Project Team"/>
        </authorList>
    </citation>
    <scope>NUCLEOTIDE SEQUENCE [LARGE SCALE MRNA] (ISOFORM 1)</scope>
    <source>
        <tissue>Brain</tissue>
    </source>
</reference>
<reference key="3">
    <citation type="journal article" date="2003" name="Genome Res.">
        <title>Differential expansion of zinc-finger transcription factor loci in homologous human and mouse gene clusters.</title>
        <authorList>
            <person name="Shannon M."/>
            <person name="Hamilton A.T."/>
            <person name="Gordon L."/>
            <person name="Branscomb E."/>
            <person name="Stubbs L."/>
        </authorList>
    </citation>
    <scope>NUCLEOTIDE SEQUENCE [MRNA] OF 1-420 (ISOFORM 1)</scope>
    <scope>VARIANT SER-156</scope>
    <source>
        <tissue>Brain</tissue>
    </source>
</reference>
<reference key="4">
    <citation type="submission" date="2005-03" db="EMBL/GenBank/DDBJ databases">
        <authorList>
            <person name="Totoki Y."/>
            <person name="Toyoda A."/>
            <person name="Takeda T."/>
            <person name="Sakaki Y."/>
            <person name="Tanaka A."/>
            <person name="Yokoyama S."/>
            <person name="Ohara O."/>
            <person name="Nagase T."/>
            <person name="Kikuno R.F."/>
        </authorList>
    </citation>
    <scope>NUCLEOTIDE SEQUENCE [LARGE SCALE MRNA] OF 397-825</scope>
    <scope>VARIANT ARG-662</scope>
    <source>
        <tissue>Brain</tissue>
    </source>
</reference>
<reference key="5">
    <citation type="journal article" date="2017" name="Nat. Struct. Mol. Biol.">
        <title>Site-specific mapping of the human SUMO proteome reveals co-modification with phosphorylation.</title>
        <authorList>
            <person name="Hendriks I.A."/>
            <person name="Lyon D."/>
            <person name="Young C."/>
            <person name="Jensen L.J."/>
            <person name="Vertegaal A.C."/>
            <person name="Nielsen M.L."/>
        </authorList>
    </citation>
    <scope>SUMOYLATION [LARGE SCALE ANALYSIS] AT LYS-543</scope>
    <scope>IDENTIFICATION BY MASS SPECTROMETRY [LARGE SCALE ANALYSIS]</scope>
</reference>
<keyword id="KW-0025">Alternative splicing</keyword>
<keyword id="KW-0238">DNA-binding</keyword>
<keyword id="KW-1017">Isopeptide bond</keyword>
<keyword id="KW-0479">Metal-binding</keyword>
<keyword id="KW-0539">Nucleus</keyword>
<keyword id="KW-1267">Proteomics identification</keyword>
<keyword id="KW-1185">Reference proteome</keyword>
<keyword id="KW-0677">Repeat</keyword>
<keyword id="KW-0804">Transcription</keyword>
<keyword id="KW-0805">Transcription regulation</keyword>
<keyword id="KW-0832">Ubl conjugation</keyword>
<keyword id="KW-0862">Zinc</keyword>
<keyword id="KW-0863">Zinc-finger</keyword>
<gene>
    <name evidence="7" type="primary">ZNF229</name>
</gene>
<organism>
    <name type="scientific">Homo sapiens</name>
    <name type="common">Human</name>
    <dbReference type="NCBI Taxonomy" id="9606"/>
    <lineage>
        <taxon>Eukaryota</taxon>
        <taxon>Metazoa</taxon>
        <taxon>Chordata</taxon>
        <taxon>Craniata</taxon>
        <taxon>Vertebrata</taxon>
        <taxon>Euteleostomi</taxon>
        <taxon>Mammalia</taxon>
        <taxon>Eutheria</taxon>
        <taxon>Euarchontoglires</taxon>
        <taxon>Primates</taxon>
        <taxon>Haplorrhini</taxon>
        <taxon>Catarrhini</taxon>
        <taxon>Hominidae</taxon>
        <taxon>Homo</taxon>
    </lineage>
</organism>
<evidence type="ECO:0000255" key="1">
    <source>
        <dbReference type="PROSITE-ProRule" id="PRU00042"/>
    </source>
</evidence>
<evidence type="ECO:0000255" key="2">
    <source>
        <dbReference type="PROSITE-ProRule" id="PRU00119"/>
    </source>
</evidence>
<evidence type="ECO:0000256" key="3">
    <source>
        <dbReference type="SAM" id="MobiDB-lite"/>
    </source>
</evidence>
<evidence type="ECO:0000269" key="4">
    <source>
    </source>
</evidence>
<evidence type="ECO:0000269" key="5">
    <source ref="4"/>
</evidence>
<evidence type="ECO:0000305" key="6"/>
<evidence type="ECO:0000312" key="7">
    <source>
        <dbReference type="HGNC" id="HGNC:13022"/>
    </source>
</evidence>
<evidence type="ECO:0007744" key="8">
    <source>
    </source>
</evidence>
<sequence length="825" mass="93767">METLTSRHEKRALHSQASAISQDREEKIMSQEPLSFKDVAVVFTEEELELLDSTQRQLYQDVMQENFRNLLSVGERNPLGDKNGKDTEYIQDEELRFFSHKELSSCKIWEEVAGELPGSQDCRVNLQGKDFQFSEDAAPHQGWEGASTPCFPIENFLDSLQGDGLIGLENQQFPAWRAIRPIPIQGSWAKAFVNQLGDVQERCKNLDTEDTVYKCNWDDDSFCWISCHVDHRFPEIDKPCGCNKCRKDCIKNSVLHRINPGENGLKSNEYRNGFRDDADLPPHPRVPLKEKLCQYDEFSEGLRHSAHLNRHQRVPTGEKSVKSLERGRGVRQNTHIRNHPRAPVGDMPYRCDVCGKGFRYKSVLLIHQGVHTGRRPYKCEECGKAFGRSSNLLVHQRVHTGEKPYKCSECGKGFSYSSVLQVHQRLHTGEKPYTCSECGKGFCAKSALHKHQHIHPGEKPYSCGECGKGFSCSSHLSSHQKTHTGERPYQCDKCGKGFSHNSYLQAHQRVHMGQHLYKCNVCGKSFSYSSGLLMHQRLHTGEKPYKCECGKSFGRSSDLHIHQRVHTGEKPYKCSECGKGFRRNSDLHSHQRVHTGERPYVCDVCGKGFIYSSDLLIHQRVHTGEKPYKCAECGKGFSYSSGLLIHQRVHTGEKPYRCQECGKGFRCTSSLHKHQRVHTGKKPYTCDQCGKGFSYGSNLRTHQRLHTGEKPYTCCECGKGFRYGSGLLSHKRVHTGEKPYRCHVCGKGYSQSSHLQGHQRVHTGEKPYKCEECGKGFGRNSCLHVHQRVHTGEKPYTCGVCGKGFSYTSGLRNHQRVHLGENPYK</sequence>
<protein>
    <recommendedName>
        <fullName evidence="6">Zinc finger protein 229</fullName>
    </recommendedName>
</protein>